<keyword id="KW-0328">Glycosyltransferase</keyword>
<keyword id="KW-0472">Membrane</keyword>
<keyword id="KW-1185">Reference proteome</keyword>
<keyword id="KW-0808">Transferase</keyword>
<keyword id="KW-0812">Transmembrane</keyword>
<keyword id="KW-1133">Transmembrane helix</keyword>
<comment type="subcellular location">
    <subcellularLocation>
        <location evidence="2">Membrane</location>
        <topology evidence="2">Single-pass membrane protein</topology>
    </subcellularLocation>
</comment>
<comment type="similarity">
    <text evidence="2">Belongs to the glycosyltransferase 92 family.</text>
</comment>
<evidence type="ECO:0000255" key="1"/>
<evidence type="ECO:0000305" key="2"/>
<gene>
    <name type="ORF">F59C6.8</name>
</gene>
<dbReference type="EC" id="2.4.1.-" evidence="2"/>
<dbReference type="EMBL" id="Z79600">
    <property type="protein sequence ID" value="CAB01879.3"/>
    <property type="molecule type" value="Genomic_DNA"/>
</dbReference>
<dbReference type="PIR" id="T22993">
    <property type="entry name" value="T22993"/>
</dbReference>
<dbReference type="RefSeq" id="NP_492748.3">
    <property type="nucleotide sequence ID" value="NM_060347.5"/>
</dbReference>
<dbReference type="FunCoup" id="Q93834">
    <property type="interactions" value="17"/>
</dbReference>
<dbReference type="STRING" id="6239.F59C6.8.1"/>
<dbReference type="PaxDb" id="6239-F59C6.8"/>
<dbReference type="EnsemblMetazoa" id="F59C6.8.1">
    <property type="protein sequence ID" value="F59C6.8.1"/>
    <property type="gene ID" value="WBGene00010327"/>
</dbReference>
<dbReference type="GeneID" id="186606"/>
<dbReference type="KEGG" id="cel:CELE_F59C6.8"/>
<dbReference type="UCSC" id="F59C6.8">
    <property type="organism name" value="c. elegans"/>
</dbReference>
<dbReference type="AGR" id="WB:WBGene00010327"/>
<dbReference type="CTD" id="186606"/>
<dbReference type="WormBase" id="F59C6.8">
    <property type="protein sequence ID" value="CE45930"/>
    <property type="gene ID" value="WBGene00010327"/>
</dbReference>
<dbReference type="eggNOG" id="KOG4735">
    <property type="taxonomic scope" value="Eukaryota"/>
</dbReference>
<dbReference type="GeneTree" id="ENSGT00970000195836"/>
<dbReference type="HOGENOM" id="CLU_511155_0_0_1"/>
<dbReference type="InParanoid" id="Q93834"/>
<dbReference type="OMA" id="YPLIEVC"/>
<dbReference type="OrthoDB" id="2526284at2759"/>
<dbReference type="PhylomeDB" id="Q93834"/>
<dbReference type="PRO" id="PR:Q93834"/>
<dbReference type="Proteomes" id="UP000001940">
    <property type="component" value="Chromosome I"/>
</dbReference>
<dbReference type="Bgee" id="WBGene00010327">
    <property type="expression patterns" value="Expressed in embryo and 3 other cell types or tissues"/>
</dbReference>
<dbReference type="GO" id="GO:0016020">
    <property type="term" value="C:membrane"/>
    <property type="evidence" value="ECO:0007669"/>
    <property type="project" value="UniProtKB-SubCell"/>
</dbReference>
<dbReference type="GO" id="GO:0016757">
    <property type="term" value="F:glycosyltransferase activity"/>
    <property type="evidence" value="ECO:0007669"/>
    <property type="project" value="UniProtKB-KW"/>
</dbReference>
<dbReference type="InterPro" id="IPR008166">
    <property type="entry name" value="Glyco_transf_92"/>
</dbReference>
<dbReference type="InterPro" id="IPR052012">
    <property type="entry name" value="GTase_92"/>
</dbReference>
<dbReference type="PANTHER" id="PTHR21645">
    <property type="entry name" value="GLYCOSYLTRANSFERASE FAMILY 92 PROTEIN"/>
    <property type="match status" value="1"/>
</dbReference>
<dbReference type="PANTHER" id="PTHR21645:SF2">
    <property type="entry name" value="GLYCOSYLTRANSFERASE FAMILY 92 PROTEIN F59C6.8"/>
    <property type="match status" value="1"/>
</dbReference>
<dbReference type="Pfam" id="PF01697">
    <property type="entry name" value="Glyco_transf_92"/>
    <property type="match status" value="1"/>
</dbReference>
<name>YYVP_CAEEL</name>
<proteinExistence type="inferred from homology"/>
<organism>
    <name type="scientific">Caenorhabditis elegans</name>
    <dbReference type="NCBI Taxonomy" id="6239"/>
    <lineage>
        <taxon>Eukaryota</taxon>
        <taxon>Metazoa</taxon>
        <taxon>Ecdysozoa</taxon>
        <taxon>Nematoda</taxon>
        <taxon>Chromadorea</taxon>
        <taxon>Rhabditida</taxon>
        <taxon>Rhabditina</taxon>
        <taxon>Rhabditomorpha</taxon>
        <taxon>Rhabditoidea</taxon>
        <taxon>Rhabditidae</taxon>
        <taxon>Peloderinae</taxon>
        <taxon>Caenorhabditis</taxon>
    </lineage>
</organism>
<sequence length="515" mass="59399">MMLKSCGLIFKGKRFVRLFIFIAVCLGFLIAVTILAGLTIFDRQHNHILHDYVARNDDIVVLSTTYYENSKSFPPNTAVILFNSVQVFHLKYSNLNVVAETMQGNVEVQFKIQPVINTIPFFCKWVPYLAVGQVPEDHVLLKLSTNKIDGMELSLRTPYETPRKVVACFSPLFLNERWQLLLATVEIYSHYGAFMHFYVRSIITDLFKLIKDNKNTRISPWSAIRIGESRAASPMFDPNTELEFRNQASAMTDCLLQYKEAAEFIVFPDPDDILVPVLGKNYYEEFTQAFKMFPTAGAVVYNMTQTSIESSMTPALYSPISMLASMKFKGEQKWGKLVVRPERVDSTWIHRSYAIKEGFEQKVMPVDVNAFYHLRIWKFPEVPTFNRSKISNPPFFDPYHLNATKRAIYKISDGLKIQRKFKNRVSQGTMKTIYSRLPKVSLYYPLIEVCYNRIFYSMKDIGTCRGPEYCNIPAFPGLRCTNVASEFVTYKSYRNIYIHQLISTDFEEGDNGCTL</sequence>
<protein>
    <recommendedName>
        <fullName>Glycosyltransferase family 92 protein F59C6.8</fullName>
        <ecNumber evidence="2">2.4.1.-</ecNumber>
    </recommendedName>
</protein>
<reference key="1">
    <citation type="journal article" date="1998" name="Science">
        <title>Genome sequence of the nematode C. elegans: a platform for investigating biology.</title>
        <authorList>
            <consortium name="The C. elegans sequencing consortium"/>
        </authorList>
    </citation>
    <scope>NUCLEOTIDE SEQUENCE [LARGE SCALE GENOMIC DNA]</scope>
    <source>
        <strain>Bristol N2</strain>
    </source>
</reference>
<accession>Q93834</accession>
<feature type="chain" id="PRO_0000065387" description="Glycosyltransferase family 92 protein F59C6.8">
    <location>
        <begin position="1"/>
        <end position="515"/>
    </location>
</feature>
<feature type="transmembrane region" description="Helical" evidence="1">
    <location>
        <begin position="18"/>
        <end position="38"/>
    </location>
</feature>
<feature type="domain" description="GT92">
    <location>
        <begin position="163"/>
        <end position="456"/>
    </location>
</feature>